<sequence length="70" mass="7850">MSKQKKFEENLAELETIVQSLENGEIALEDAITAFQKGMVLSKELQATLDKAEKTLVKVMQEDGTESDFE</sequence>
<accession>P67466</accession>
<accession>Q97QJ9</accession>
<protein>
    <recommendedName>
        <fullName evidence="1">Exodeoxyribonuclease 7 small subunit</fullName>
        <ecNumber evidence="1">3.1.11.6</ecNumber>
    </recommendedName>
    <alternativeName>
        <fullName evidence="1">Exodeoxyribonuclease VII small subunit</fullName>
        <shortName evidence="1">Exonuclease VII small subunit</shortName>
    </alternativeName>
</protein>
<name>EX7S_STRR6</name>
<feature type="chain" id="PRO_0000207017" description="Exodeoxyribonuclease 7 small subunit">
    <location>
        <begin position="1"/>
        <end position="70"/>
    </location>
</feature>
<reference key="1">
    <citation type="journal article" date="2001" name="J. Bacteriol.">
        <title>Genome of the bacterium Streptococcus pneumoniae strain R6.</title>
        <authorList>
            <person name="Hoskins J."/>
            <person name="Alborn W.E. Jr."/>
            <person name="Arnold J."/>
            <person name="Blaszczak L.C."/>
            <person name="Burgett S."/>
            <person name="DeHoff B.S."/>
            <person name="Estrem S.T."/>
            <person name="Fritz L."/>
            <person name="Fu D.-J."/>
            <person name="Fuller W."/>
            <person name="Geringer C."/>
            <person name="Gilmour R."/>
            <person name="Glass J.S."/>
            <person name="Khoja H."/>
            <person name="Kraft A.R."/>
            <person name="Lagace R.E."/>
            <person name="LeBlanc D.J."/>
            <person name="Lee L.N."/>
            <person name="Lefkowitz E.J."/>
            <person name="Lu J."/>
            <person name="Matsushima P."/>
            <person name="McAhren S.M."/>
            <person name="McHenney M."/>
            <person name="McLeaster K."/>
            <person name="Mundy C.W."/>
            <person name="Nicas T.I."/>
            <person name="Norris F.H."/>
            <person name="O'Gara M."/>
            <person name="Peery R.B."/>
            <person name="Robertson G.T."/>
            <person name="Rockey P."/>
            <person name="Sun P.-M."/>
            <person name="Winkler M.E."/>
            <person name="Yang Y."/>
            <person name="Young-Bellido M."/>
            <person name="Zhao G."/>
            <person name="Zook C.A."/>
            <person name="Baltz R.H."/>
            <person name="Jaskunas S.R."/>
            <person name="Rosteck P.R. Jr."/>
            <person name="Skatrud P.L."/>
            <person name="Glass J.I."/>
        </authorList>
    </citation>
    <scope>NUCLEOTIDE SEQUENCE [LARGE SCALE GENOMIC DNA]</scope>
    <source>
        <strain>ATCC BAA-255 / R6</strain>
    </source>
</reference>
<gene>
    <name evidence="1" type="primary">xseB</name>
    <name type="ordered locus">spr1088</name>
</gene>
<keyword id="KW-0963">Cytoplasm</keyword>
<keyword id="KW-0269">Exonuclease</keyword>
<keyword id="KW-0378">Hydrolase</keyword>
<keyword id="KW-0540">Nuclease</keyword>
<keyword id="KW-1185">Reference proteome</keyword>
<dbReference type="EC" id="3.1.11.6" evidence="1"/>
<dbReference type="EMBL" id="AE007317">
    <property type="protein sequence ID" value="AAK99891.1"/>
    <property type="molecule type" value="Genomic_DNA"/>
</dbReference>
<dbReference type="PIR" id="G98007">
    <property type="entry name" value="G98007"/>
</dbReference>
<dbReference type="RefSeq" id="NP_358681.1">
    <property type="nucleotide sequence ID" value="NC_003098.1"/>
</dbReference>
<dbReference type="RefSeq" id="WP_000043230.1">
    <property type="nucleotide sequence ID" value="NC_003098.1"/>
</dbReference>
<dbReference type="SMR" id="P67466"/>
<dbReference type="STRING" id="171101.spr1088"/>
<dbReference type="KEGG" id="spr:spr1088"/>
<dbReference type="PATRIC" id="fig|171101.6.peg.1182"/>
<dbReference type="eggNOG" id="COG1722">
    <property type="taxonomic scope" value="Bacteria"/>
</dbReference>
<dbReference type="HOGENOM" id="CLU_145918_3_2_9"/>
<dbReference type="Proteomes" id="UP000000586">
    <property type="component" value="Chromosome"/>
</dbReference>
<dbReference type="GO" id="GO:0005829">
    <property type="term" value="C:cytosol"/>
    <property type="evidence" value="ECO:0000318"/>
    <property type="project" value="GO_Central"/>
</dbReference>
<dbReference type="GO" id="GO:0009318">
    <property type="term" value="C:exodeoxyribonuclease VII complex"/>
    <property type="evidence" value="ECO:0007669"/>
    <property type="project" value="InterPro"/>
</dbReference>
<dbReference type="GO" id="GO:0008855">
    <property type="term" value="F:exodeoxyribonuclease VII activity"/>
    <property type="evidence" value="ECO:0000318"/>
    <property type="project" value="GO_Central"/>
</dbReference>
<dbReference type="GO" id="GO:0006308">
    <property type="term" value="P:DNA catabolic process"/>
    <property type="evidence" value="ECO:0007669"/>
    <property type="project" value="UniProtKB-UniRule"/>
</dbReference>
<dbReference type="FunFam" id="1.10.287.1040:FF:000003">
    <property type="entry name" value="Exodeoxyribonuclease 7 small subunit"/>
    <property type="match status" value="1"/>
</dbReference>
<dbReference type="Gene3D" id="1.10.287.1040">
    <property type="entry name" value="Exonuclease VII, small subunit"/>
    <property type="match status" value="1"/>
</dbReference>
<dbReference type="HAMAP" id="MF_00337">
    <property type="entry name" value="Exonuc_7_S"/>
    <property type="match status" value="1"/>
</dbReference>
<dbReference type="InterPro" id="IPR003761">
    <property type="entry name" value="Exonuc_VII_S"/>
</dbReference>
<dbReference type="InterPro" id="IPR037004">
    <property type="entry name" value="Exonuc_VII_ssu_sf"/>
</dbReference>
<dbReference type="NCBIfam" id="NF002138">
    <property type="entry name" value="PRK00977.1-2"/>
    <property type="match status" value="1"/>
</dbReference>
<dbReference type="NCBIfam" id="TIGR01280">
    <property type="entry name" value="xseB"/>
    <property type="match status" value="1"/>
</dbReference>
<dbReference type="PANTHER" id="PTHR34137">
    <property type="entry name" value="EXODEOXYRIBONUCLEASE 7 SMALL SUBUNIT"/>
    <property type="match status" value="1"/>
</dbReference>
<dbReference type="PANTHER" id="PTHR34137:SF1">
    <property type="entry name" value="EXODEOXYRIBONUCLEASE 7 SMALL SUBUNIT"/>
    <property type="match status" value="1"/>
</dbReference>
<dbReference type="Pfam" id="PF02609">
    <property type="entry name" value="Exonuc_VII_S"/>
    <property type="match status" value="1"/>
</dbReference>
<dbReference type="PIRSF" id="PIRSF006488">
    <property type="entry name" value="Exonuc_VII_S"/>
    <property type="match status" value="1"/>
</dbReference>
<dbReference type="SUPFAM" id="SSF116842">
    <property type="entry name" value="XseB-like"/>
    <property type="match status" value="1"/>
</dbReference>
<organism>
    <name type="scientific">Streptococcus pneumoniae (strain ATCC BAA-255 / R6)</name>
    <dbReference type="NCBI Taxonomy" id="171101"/>
    <lineage>
        <taxon>Bacteria</taxon>
        <taxon>Bacillati</taxon>
        <taxon>Bacillota</taxon>
        <taxon>Bacilli</taxon>
        <taxon>Lactobacillales</taxon>
        <taxon>Streptococcaceae</taxon>
        <taxon>Streptococcus</taxon>
    </lineage>
</organism>
<evidence type="ECO:0000255" key="1">
    <source>
        <dbReference type="HAMAP-Rule" id="MF_00337"/>
    </source>
</evidence>
<comment type="function">
    <text evidence="1">Bidirectionally degrades single-stranded DNA into large acid-insoluble oligonucleotides, which are then degraded further into small acid-soluble oligonucleotides.</text>
</comment>
<comment type="catalytic activity">
    <reaction evidence="1">
        <text>Exonucleolytic cleavage in either 5'- to 3'- or 3'- to 5'-direction to yield nucleoside 5'-phosphates.</text>
        <dbReference type="EC" id="3.1.11.6"/>
    </reaction>
</comment>
<comment type="subunit">
    <text evidence="1">Heterooligomer composed of large and small subunits.</text>
</comment>
<comment type="subcellular location">
    <subcellularLocation>
        <location evidence="1">Cytoplasm</location>
    </subcellularLocation>
</comment>
<comment type="similarity">
    <text evidence="1">Belongs to the XseB family.</text>
</comment>
<proteinExistence type="inferred from homology"/>